<keyword id="KW-0067">ATP-binding</keyword>
<keyword id="KW-0119">Carbohydrate metabolism</keyword>
<keyword id="KW-0418">Kinase</keyword>
<keyword id="KW-0511">Multifunctional enzyme</keyword>
<keyword id="KW-0547">Nucleotide-binding</keyword>
<keyword id="KW-0548">Nucleotidyltransferase</keyword>
<keyword id="KW-1185">Reference proteome</keyword>
<keyword id="KW-0808">Transferase</keyword>
<feature type="chain" id="PRO_0000335557" description="Bifunctional protein HldE">
    <location>
        <begin position="1"/>
        <end position="462"/>
    </location>
</feature>
<feature type="region of interest" description="Ribokinase">
    <location>
        <begin position="1"/>
        <end position="309"/>
    </location>
</feature>
<feature type="region of interest" description="Cytidylyltransferase">
    <location>
        <begin position="336"/>
        <end position="462"/>
    </location>
</feature>
<feature type="active site" evidence="1">
    <location>
        <position position="254"/>
    </location>
</feature>
<feature type="binding site" evidence="1">
    <location>
        <begin position="186"/>
        <end position="189"/>
    </location>
    <ligand>
        <name>ATP</name>
        <dbReference type="ChEBI" id="CHEBI:30616"/>
    </ligand>
</feature>
<name>HLDE_NITSB</name>
<reference key="1">
    <citation type="journal article" date="2007" name="Proc. Natl. Acad. Sci. U.S.A.">
        <title>Deep-sea vent epsilon-proteobacterial genomes provide insights into emergence of pathogens.</title>
        <authorList>
            <person name="Nakagawa S."/>
            <person name="Takaki Y."/>
            <person name="Shimamura S."/>
            <person name="Reysenbach A.-L."/>
            <person name="Takai K."/>
            <person name="Horikoshi K."/>
        </authorList>
    </citation>
    <scope>NUCLEOTIDE SEQUENCE [LARGE SCALE GENOMIC DNA]</scope>
    <source>
        <strain>SB155-2</strain>
    </source>
</reference>
<dbReference type="EC" id="2.7.1.167" evidence="1"/>
<dbReference type="EC" id="2.7.7.70" evidence="1"/>
<dbReference type="EMBL" id="AP009178">
    <property type="protein sequence ID" value="BAF70555.1"/>
    <property type="molecule type" value="Genomic_DNA"/>
</dbReference>
<dbReference type="RefSeq" id="WP_012082818.1">
    <property type="nucleotide sequence ID" value="NC_009662.1"/>
</dbReference>
<dbReference type="SMR" id="A6Q4Z6"/>
<dbReference type="FunCoup" id="A6Q4Z6">
    <property type="interactions" value="255"/>
</dbReference>
<dbReference type="STRING" id="387092.NIS_1448"/>
<dbReference type="KEGG" id="nis:NIS_1448"/>
<dbReference type="eggNOG" id="COG0615">
    <property type="taxonomic scope" value="Bacteria"/>
</dbReference>
<dbReference type="eggNOG" id="COG2870">
    <property type="taxonomic scope" value="Bacteria"/>
</dbReference>
<dbReference type="HOGENOM" id="CLU_021150_2_1_7"/>
<dbReference type="InParanoid" id="A6Q4Z6"/>
<dbReference type="OrthoDB" id="9802794at2"/>
<dbReference type="UniPathway" id="UPA00356">
    <property type="reaction ID" value="UER00437"/>
</dbReference>
<dbReference type="UniPathway" id="UPA00356">
    <property type="reaction ID" value="UER00439"/>
</dbReference>
<dbReference type="Proteomes" id="UP000001118">
    <property type="component" value="Chromosome"/>
</dbReference>
<dbReference type="GO" id="GO:0005829">
    <property type="term" value="C:cytosol"/>
    <property type="evidence" value="ECO:0007669"/>
    <property type="project" value="TreeGrafter"/>
</dbReference>
<dbReference type="GO" id="GO:0005524">
    <property type="term" value="F:ATP binding"/>
    <property type="evidence" value="ECO:0007669"/>
    <property type="project" value="UniProtKB-UniRule"/>
</dbReference>
<dbReference type="GO" id="GO:0033785">
    <property type="term" value="F:heptose 7-phosphate kinase activity"/>
    <property type="evidence" value="ECO:0007669"/>
    <property type="project" value="UniProtKB-UniRule"/>
</dbReference>
<dbReference type="GO" id="GO:0033786">
    <property type="term" value="F:heptose-1-phosphate adenylyltransferase activity"/>
    <property type="evidence" value="ECO:0007669"/>
    <property type="project" value="UniProtKB-UniRule"/>
</dbReference>
<dbReference type="GO" id="GO:0016773">
    <property type="term" value="F:phosphotransferase activity, alcohol group as acceptor"/>
    <property type="evidence" value="ECO:0007669"/>
    <property type="project" value="InterPro"/>
</dbReference>
<dbReference type="GO" id="GO:0097171">
    <property type="term" value="P:ADP-L-glycero-beta-D-manno-heptose biosynthetic process"/>
    <property type="evidence" value="ECO:0007669"/>
    <property type="project" value="UniProtKB-UniPathway"/>
</dbReference>
<dbReference type="CDD" id="cd01172">
    <property type="entry name" value="RfaE_like"/>
    <property type="match status" value="1"/>
</dbReference>
<dbReference type="FunFam" id="3.40.1190.20:FF:000002">
    <property type="entry name" value="Bifunctional protein HldE"/>
    <property type="match status" value="1"/>
</dbReference>
<dbReference type="Gene3D" id="3.40.1190.20">
    <property type="match status" value="1"/>
</dbReference>
<dbReference type="Gene3D" id="3.40.50.620">
    <property type="entry name" value="HUPs"/>
    <property type="match status" value="1"/>
</dbReference>
<dbReference type="HAMAP" id="MF_01603">
    <property type="entry name" value="HldE"/>
    <property type="match status" value="1"/>
</dbReference>
<dbReference type="InterPro" id="IPR023030">
    <property type="entry name" value="Bifunc_HldE"/>
</dbReference>
<dbReference type="InterPro" id="IPR004821">
    <property type="entry name" value="Cyt_trans-like"/>
</dbReference>
<dbReference type="InterPro" id="IPR011611">
    <property type="entry name" value="PfkB_dom"/>
</dbReference>
<dbReference type="InterPro" id="IPR011913">
    <property type="entry name" value="RfaE_dom_I"/>
</dbReference>
<dbReference type="InterPro" id="IPR011914">
    <property type="entry name" value="RfaE_dom_II"/>
</dbReference>
<dbReference type="InterPro" id="IPR029056">
    <property type="entry name" value="Ribokinase-like"/>
</dbReference>
<dbReference type="InterPro" id="IPR014729">
    <property type="entry name" value="Rossmann-like_a/b/a_fold"/>
</dbReference>
<dbReference type="NCBIfam" id="TIGR00125">
    <property type="entry name" value="cyt_tran_rel"/>
    <property type="match status" value="1"/>
</dbReference>
<dbReference type="NCBIfam" id="TIGR02198">
    <property type="entry name" value="rfaE_dom_I"/>
    <property type="match status" value="1"/>
</dbReference>
<dbReference type="NCBIfam" id="TIGR02199">
    <property type="entry name" value="rfaE_dom_II"/>
    <property type="match status" value="1"/>
</dbReference>
<dbReference type="PANTHER" id="PTHR46969">
    <property type="entry name" value="BIFUNCTIONAL PROTEIN HLDE"/>
    <property type="match status" value="1"/>
</dbReference>
<dbReference type="PANTHER" id="PTHR46969:SF1">
    <property type="entry name" value="BIFUNCTIONAL PROTEIN HLDE"/>
    <property type="match status" value="1"/>
</dbReference>
<dbReference type="Pfam" id="PF01467">
    <property type="entry name" value="CTP_transf_like"/>
    <property type="match status" value="1"/>
</dbReference>
<dbReference type="Pfam" id="PF00294">
    <property type="entry name" value="PfkB"/>
    <property type="match status" value="1"/>
</dbReference>
<dbReference type="SUPFAM" id="SSF52374">
    <property type="entry name" value="Nucleotidylyl transferase"/>
    <property type="match status" value="1"/>
</dbReference>
<dbReference type="SUPFAM" id="SSF53613">
    <property type="entry name" value="Ribokinase-like"/>
    <property type="match status" value="1"/>
</dbReference>
<sequence>MKPRILVLGDVMIDHYLFGKCDRISPEAPVQVVDVQKEELVLGGAGNVVNNLLAFGAEVGIISVVGEDANGIWLEQRFQEKGVQTYLLKENRPTTKKSRIIASNQQIVRVDREEKKEIESLTQQKILNVFDRVIKEYDLVLLSDYDKGVLTKEVTQTVIQRSSVPVFVDPKNDFEKYRGATLIKPNKKEASKAVGFLIKNEEDLKRAGWKLKKELDLQSLIVTLSEEGMAIFEEEMMRIPTVAKEVYDVTGAGDTVLAALGYAVAKGKNLKEAAVFANLAAGVVVGKVGAATATLEEIEEYERSIRKAPTEEFIKDFEEIELISKDLHKRGKRIVFTNGCFDILHLGHVKYLQKAKELGDVLIVGVNSDASVKRLKGDDRPINPQFDRAYLLASLEAVDYVVIFEEDTPYELIKIVKPDILVKGGDYKGKEVVGSDIAKEVRLIDFVEGKSTTAIVERMRSC</sequence>
<comment type="function">
    <text evidence="1">Catalyzes the phosphorylation of D-glycero-D-manno-heptose 7-phosphate at the C-1 position to selectively form D-glycero-beta-D-manno-heptose-1,7-bisphosphate.</text>
</comment>
<comment type="function">
    <text evidence="1">Catalyzes the ADP transfer from ATP to D-glycero-beta-D-manno-heptose 1-phosphate, yielding ADP-D-glycero-beta-D-manno-heptose.</text>
</comment>
<comment type="catalytic activity">
    <reaction evidence="1">
        <text>D-glycero-beta-D-manno-heptose 7-phosphate + ATP = D-glycero-beta-D-manno-heptose 1,7-bisphosphate + ADP + H(+)</text>
        <dbReference type="Rhea" id="RHEA:27473"/>
        <dbReference type="ChEBI" id="CHEBI:15378"/>
        <dbReference type="ChEBI" id="CHEBI:30616"/>
        <dbReference type="ChEBI" id="CHEBI:60204"/>
        <dbReference type="ChEBI" id="CHEBI:60208"/>
        <dbReference type="ChEBI" id="CHEBI:456216"/>
        <dbReference type="EC" id="2.7.1.167"/>
    </reaction>
</comment>
<comment type="catalytic activity">
    <reaction evidence="1">
        <text>D-glycero-beta-D-manno-heptose 1-phosphate + ATP + H(+) = ADP-D-glycero-beta-D-manno-heptose + diphosphate</text>
        <dbReference type="Rhea" id="RHEA:27465"/>
        <dbReference type="ChEBI" id="CHEBI:15378"/>
        <dbReference type="ChEBI" id="CHEBI:30616"/>
        <dbReference type="ChEBI" id="CHEBI:33019"/>
        <dbReference type="ChEBI" id="CHEBI:59967"/>
        <dbReference type="ChEBI" id="CHEBI:61593"/>
        <dbReference type="EC" id="2.7.7.70"/>
    </reaction>
</comment>
<comment type="pathway">
    <text evidence="1">Nucleotide-sugar biosynthesis; ADP-L-glycero-beta-D-manno-heptose biosynthesis; ADP-L-glycero-beta-D-manno-heptose from D-glycero-beta-D-manno-heptose 7-phosphate: step 1/4.</text>
</comment>
<comment type="pathway">
    <text evidence="1">Nucleotide-sugar biosynthesis; ADP-L-glycero-beta-D-manno-heptose biosynthesis; ADP-L-glycero-beta-D-manno-heptose from D-glycero-beta-D-manno-heptose 7-phosphate: step 3/4.</text>
</comment>
<comment type="subunit">
    <text evidence="1">Homodimer.</text>
</comment>
<comment type="similarity">
    <text evidence="1">In the N-terminal section; belongs to the carbohydrate kinase PfkB family.</text>
</comment>
<comment type="similarity">
    <text evidence="1">In the C-terminal section; belongs to the cytidylyltransferase family.</text>
</comment>
<gene>
    <name evidence="1" type="primary">hldE</name>
    <name type="ordered locus">NIS_1448</name>
</gene>
<accession>A6Q4Z6</accession>
<proteinExistence type="inferred from homology"/>
<protein>
    <recommendedName>
        <fullName evidence="1">Bifunctional protein HldE</fullName>
    </recommendedName>
    <domain>
        <recommendedName>
            <fullName evidence="1">D-beta-D-heptose 7-phosphate kinase</fullName>
            <ecNumber evidence="1">2.7.1.167</ecNumber>
        </recommendedName>
        <alternativeName>
            <fullName evidence="1">D-beta-D-heptose 7-phosphotransferase</fullName>
        </alternativeName>
        <alternativeName>
            <fullName evidence="1">D-glycero-beta-D-manno-heptose-7-phosphate kinase</fullName>
        </alternativeName>
    </domain>
    <domain>
        <recommendedName>
            <fullName evidence="1">D-beta-D-heptose 1-phosphate adenylyltransferase</fullName>
            <ecNumber evidence="1">2.7.7.70</ecNumber>
        </recommendedName>
        <alternativeName>
            <fullName evidence="1">D-glycero-beta-D-manno-heptose 1-phosphate adenylyltransferase</fullName>
        </alternativeName>
    </domain>
</protein>
<evidence type="ECO:0000255" key="1">
    <source>
        <dbReference type="HAMAP-Rule" id="MF_01603"/>
    </source>
</evidence>
<organism>
    <name type="scientific">Nitratiruptor sp. (strain SB155-2)</name>
    <dbReference type="NCBI Taxonomy" id="387092"/>
    <lineage>
        <taxon>Bacteria</taxon>
        <taxon>Pseudomonadati</taxon>
        <taxon>Campylobacterota</taxon>
        <taxon>Epsilonproteobacteria</taxon>
        <taxon>Nautiliales</taxon>
        <taxon>Nitratiruptoraceae</taxon>
        <taxon>Nitratiruptor</taxon>
    </lineage>
</organism>